<dbReference type="EMBL" id="CP000948">
    <property type="protein sequence ID" value="ACB04920.1"/>
    <property type="molecule type" value="Genomic_DNA"/>
</dbReference>
<dbReference type="RefSeq" id="WP_000063526.1">
    <property type="nucleotide sequence ID" value="NC_010473.1"/>
</dbReference>
<dbReference type="KEGG" id="ecd:ECDH10B_4097"/>
<dbReference type="HOGENOM" id="CLU_066437_0_0_6"/>
<dbReference type="GO" id="GO:0005886">
    <property type="term" value="C:plasma membrane"/>
    <property type="evidence" value="ECO:0007669"/>
    <property type="project" value="UniProtKB-SubCell"/>
</dbReference>
<dbReference type="GO" id="GO:0015153">
    <property type="term" value="F:rhamnose transmembrane transporter activity"/>
    <property type="evidence" value="ECO:0007669"/>
    <property type="project" value="UniProtKB-UniRule"/>
</dbReference>
<dbReference type="GO" id="GO:0015293">
    <property type="term" value="F:symporter activity"/>
    <property type="evidence" value="ECO:0007669"/>
    <property type="project" value="UniProtKB-KW"/>
</dbReference>
<dbReference type="HAMAP" id="MF_01532">
    <property type="entry name" value="RhaT"/>
    <property type="match status" value="1"/>
</dbReference>
<dbReference type="InterPro" id="IPR004673">
    <property type="entry name" value="L-rhamnose-proton_sym_RhaT"/>
</dbReference>
<dbReference type="NCBIfam" id="NF010021">
    <property type="entry name" value="PRK13499.1-1"/>
    <property type="match status" value="1"/>
</dbReference>
<dbReference type="NCBIfam" id="NF010023">
    <property type="entry name" value="PRK13499.1-3"/>
    <property type="match status" value="1"/>
</dbReference>
<dbReference type="NCBIfam" id="TIGR00776">
    <property type="entry name" value="RhaT"/>
    <property type="match status" value="1"/>
</dbReference>
<dbReference type="Pfam" id="PF06379">
    <property type="entry name" value="RhaT"/>
    <property type="match status" value="1"/>
</dbReference>
<accession>B1XB74</accession>
<organism>
    <name type="scientific">Escherichia coli (strain K12 / DH10B)</name>
    <dbReference type="NCBI Taxonomy" id="316385"/>
    <lineage>
        <taxon>Bacteria</taxon>
        <taxon>Pseudomonadati</taxon>
        <taxon>Pseudomonadota</taxon>
        <taxon>Gammaproteobacteria</taxon>
        <taxon>Enterobacterales</taxon>
        <taxon>Enterobacteriaceae</taxon>
        <taxon>Escherichia</taxon>
    </lineage>
</organism>
<name>RHAT_ECODH</name>
<evidence type="ECO:0000255" key="1">
    <source>
        <dbReference type="HAMAP-Rule" id="MF_01532"/>
    </source>
</evidence>
<gene>
    <name evidence="1" type="primary">rhaT</name>
    <name type="ordered locus">ECDH10B_4097</name>
</gene>
<reference key="1">
    <citation type="journal article" date="2008" name="J. Bacteriol.">
        <title>The complete genome sequence of Escherichia coli DH10B: insights into the biology of a laboratory workhorse.</title>
        <authorList>
            <person name="Durfee T."/>
            <person name="Nelson R."/>
            <person name="Baldwin S."/>
            <person name="Plunkett G. III"/>
            <person name="Burland V."/>
            <person name="Mau B."/>
            <person name="Petrosino J.F."/>
            <person name="Qin X."/>
            <person name="Muzny D.M."/>
            <person name="Ayele M."/>
            <person name="Gibbs R.A."/>
            <person name="Csorgo B."/>
            <person name="Posfai G."/>
            <person name="Weinstock G.M."/>
            <person name="Blattner F.R."/>
        </authorList>
    </citation>
    <scope>NUCLEOTIDE SEQUENCE [LARGE SCALE GENOMIC DNA]</scope>
    <source>
        <strain>K12 / DH10B</strain>
    </source>
</reference>
<protein>
    <recommendedName>
        <fullName evidence="1">L-rhamnose-proton symporter</fullName>
    </recommendedName>
    <alternativeName>
        <fullName evidence="1">L-rhamnose-H(+) transport protein</fullName>
    </alternativeName>
</protein>
<sequence>MSNAITMGIFWHLIGAASAACFYAPFKKVKKWSWETMWSVGGIVSWIILPWAISALLLPNFWAYYSSFSLSTRLPVFLFGAMWGIGNINYGLTMRYLGMSMGIGIAIGITLIVGTLMTPIINGNFDVLISTEGGRMTLLGVLVALIGVGIVTRAGQLKERKMGIKAEEFNLKKGLVLAVMCGIFSAGMSFAMNAAKPMHEAAAALGVDPLYVALPSYVVIMGGGAIINLGFCFIRLAKVKDLSLKADFSLAKSLIIHNVLLSTLGGLMWYLQFFFYAWGHARIPAQYDYISWMLHMSFYVLCGGIVGLVLKEWNNAGRRPVTVLSLGCVVIIVAANIVGIGMAN</sequence>
<comment type="function">
    <text evidence="1">Uptake of L-rhamnose across the cytoplasmic membrane with the concomitant transport of protons into the cell (symport system).</text>
</comment>
<comment type="catalytic activity">
    <reaction evidence="1">
        <text>L-rhamnopyranose(in) + H(+)(in) = L-rhamnopyranose(out) + H(+)(out)</text>
        <dbReference type="Rhea" id="RHEA:29947"/>
        <dbReference type="ChEBI" id="CHEBI:15378"/>
        <dbReference type="ChEBI" id="CHEBI:62346"/>
    </reaction>
    <physiologicalReaction direction="right-to-left" evidence="1">
        <dbReference type="Rhea" id="RHEA:29949"/>
    </physiologicalReaction>
</comment>
<comment type="subcellular location">
    <subcellularLocation>
        <location evidence="1">Cell inner membrane</location>
        <topology evidence="1">Multi-pass membrane protein</topology>
    </subcellularLocation>
</comment>
<comment type="similarity">
    <text evidence="1">Belongs to the L-rhamnose transporter (TC 2.A.7.6) family.</text>
</comment>
<feature type="chain" id="PRO_1000193742" description="L-rhamnose-proton symporter">
    <location>
        <begin position="1"/>
        <end position="344"/>
    </location>
</feature>
<feature type="transmembrane region" description="Helical" evidence="1">
    <location>
        <begin position="4"/>
        <end position="24"/>
    </location>
</feature>
<feature type="transmembrane region" description="Helical" evidence="1">
    <location>
        <begin position="38"/>
        <end position="58"/>
    </location>
</feature>
<feature type="transmembrane region" description="Helical" evidence="1">
    <location>
        <begin position="74"/>
        <end position="94"/>
    </location>
</feature>
<feature type="transmembrane region" description="Helical" evidence="1">
    <location>
        <begin position="101"/>
        <end position="121"/>
    </location>
</feature>
<feature type="transmembrane region" description="Helical" evidence="1">
    <location>
        <begin position="137"/>
        <end position="157"/>
    </location>
</feature>
<feature type="transmembrane region" description="Helical" evidence="1">
    <location>
        <begin position="175"/>
        <end position="195"/>
    </location>
</feature>
<feature type="transmembrane region" description="Helical" evidence="1">
    <location>
        <begin position="214"/>
        <end position="234"/>
    </location>
</feature>
<feature type="transmembrane region" description="Helical" evidence="1">
    <location>
        <begin position="259"/>
        <end position="279"/>
    </location>
</feature>
<feature type="transmembrane region" description="Helical" evidence="1">
    <location>
        <begin position="290"/>
        <end position="310"/>
    </location>
</feature>
<feature type="transmembrane region" description="Helical" evidence="1">
    <location>
        <begin position="323"/>
        <end position="343"/>
    </location>
</feature>
<proteinExistence type="inferred from homology"/>
<keyword id="KW-0997">Cell inner membrane</keyword>
<keyword id="KW-1003">Cell membrane</keyword>
<keyword id="KW-0472">Membrane</keyword>
<keyword id="KW-0762">Sugar transport</keyword>
<keyword id="KW-0769">Symport</keyword>
<keyword id="KW-0812">Transmembrane</keyword>
<keyword id="KW-1133">Transmembrane helix</keyword>
<keyword id="KW-0813">Transport</keyword>